<feature type="chain" id="PRO_1000051897" description="Small ribosomal subunit protein uS13">
    <location>
        <begin position="1"/>
        <end position="125"/>
    </location>
</feature>
<feature type="region of interest" description="Disordered" evidence="2">
    <location>
        <begin position="97"/>
        <end position="125"/>
    </location>
</feature>
<feature type="compositionally biased region" description="Basic residues" evidence="2">
    <location>
        <begin position="101"/>
        <end position="125"/>
    </location>
</feature>
<evidence type="ECO:0000255" key="1">
    <source>
        <dbReference type="HAMAP-Rule" id="MF_01315"/>
    </source>
</evidence>
<evidence type="ECO:0000256" key="2">
    <source>
        <dbReference type="SAM" id="MobiDB-lite"/>
    </source>
</evidence>
<evidence type="ECO:0000305" key="3"/>
<proteinExistence type="inferred from homology"/>
<comment type="function">
    <text evidence="1">Located at the top of the head of the 30S subunit, it contacts several helices of the 16S rRNA. In the 70S ribosome it contacts the 23S rRNA (bridge B1a) and protein L5 of the 50S subunit (bridge B1b), connecting the 2 subunits; these bridges are implicated in subunit movement. Contacts the tRNAs in the A and P-sites.</text>
</comment>
<comment type="subunit">
    <text evidence="1">Part of the 30S ribosomal subunit. Forms a loose heterodimer with protein S19. Forms two bridges to the 50S subunit in the 70S ribosome.</text>
</comment>
<comment type="similarity">
    <text evidence="1">Belongs to the universal ribosomal protein uS13 family.</text>
</comment>
<organism>
    <name type="scientific">Thermotoga petrophila (strain ATCC BAA-488 / DSM 13995 / JCM 10881 / RKU-1)</name>
    <dbReference type="NCBI Taxonomy" id="390874"/>
    <lineage>
        <taxon>Bacteria</taxon>
        <taxon>Thermotogati</taxon>
        <taxon>Thermotogota</taxon>
        <taxon>Thermotogae</taxon>
        <taxon>Thermotogales</taxon>
        <taxon>Thermotogaceae</taxon>
        <taxon>Thermotoga</taxon>
    </lineage>
</organism>
<gene>
    <name evidence="1" type="primary">rpsM</name>
    <name type="ordered locus">Tpet_1317</name>
</gene>
<keyword id="KW-0687">Ribonucleoprotein</keyword>
<keyword id="KW-0689">Ribosomal protein</keyword>
<keyword id="KW-0694">RNA-binding</keyword>
<keyword id="KW-0699">rRNA-binding</keyword>
<keyword id="KW-0820">tRNA-binding</keyword>
<dbReference type="EMBL" id="CP000702">
    <property type="protein sequence ID" value="ABQ47331.1"/>
    <property type="molecule type" value="Genomic_DNA"/>
</dbReference>
<dbReference type="RefSeq" id="WP_004081785.1">
    <property type="nucleotide sequence ID" value="NC_009486.1"/>
</dbReference>
<dbReference type="SMR" id="A5IMA8"/>
<dbReference type="STRING" id="390874.Tpet_1317"/>
<dbReference type="KEGG" id="tpt:Tpet_1317"/>
<dbReference type="eggNOG" id="COG0099">
    <property type="taxonomic scope" value="Bacteria"/>
</dbReference>
<dbReference type="HOGENOM" id="CLU_103849_1_2_0"/>
<dbReference type="Proteomes" id="UP000006558">
    <property type="component" value="Chromosome"/>
</dbReference>
<dbReference type="GO" id="GO:0005829">
    <property type="term" value="C:cytosol"/>
    <property type="evidence" value="ECO:0007669"/>
    <property type="project" value="TreeGrafter"/>
</dbReference>
<dbReference type="GO" id="GO:0015935">
    <property type="term" value="C:small ribosomal subunit"/>
    <property type="evidence" value="ECO:0007669"/>
    <property type="project" value="TreeGrafter"/>
</dbReference>
<dbReference type="GO" id="GO:0019843">
    <property type="term" value="F:rRNA binding"/>
    <property type="evidence" value="ECO:0007669"/>
    <property type="project" value="UniProtKB-UniRule"/>
</dbReference>
<dbReference type="GO" id="GO:0003735">
    <property type="term" value="F:structural constituent of ribosome"/>
    <property type="evidence" value="ECO:0007669"/>
    <property type="project" value="InterPro"/>
</dbReference>
<dbReference type="GO" id="GO:0000049">
    <property type="term" value="F:tRNA binding"/>
    <property type="evidence" value="ECO:0007669"/>
    <property type="project" value="UniProtKB-UniRule"/>
</dbReference>
<dbReference type="GO" id="GO:0006412">
    <property type="term" value="P:translation"/>
    <property type="evidence" value="ECO:0007669"/>
    <property type="project" value="UniProtKB-UniRule"/>
</dbReference>
<dbReference type="FunFam" id="1.10.8.50:FF:000001">
    <property type="entry name" value="30S ribosomal protein S13"/>
    <property type="match status" value="1"/>
</dbReference>
<dbReference type="FunFam" id="4.10.910.10:FF:000001">
    <property type="entry name" value="30S ribosomal protein S13"/>
    <property type="match status" value="1"/>
</dbReference>
<dbReference type="Gene3D" id="1.10.8.50">
    <property type="match status" value="1"/>
</dbReference>
<dbReference type="Gene3D" id="4.10.910.10">
    <property type="entry name" value="30s ribosomal protein s13, domain 2"/>
    <property type="match status" value="1"/>
</dbReference>
<dbReference type="HAMAP" id="MF_01315">
    <property type="entry name" value="Ribosomal_uS13"/>
    <property type="match status" value="1"/>
</dbReference>
<dbReference type="InterPro" id="IPR027437">
    <property type="entry name" value="Rbsml_uS13_C"/>
</dbReference>
<dbReference type="InterPro" id="IPR001892">
    <property type="entry name" value="Ribosomal_uS13"/>
</dbReference>
<dbReference type="InterPro" id="IPR010979">
    <property type="entry name" value="Ribosomal_uS13-like_H2TH"/>
</dbReference>
<dbReference type="InterPro" id="IPR019980">
    <property type="entry name" value="Ribosomal_uS13_bac-type"/>
</dbReference>
<dbReference type="InterPro" id="IPR018269">
    <property type="entry name" value="Ribosomal_uS13_CS"/>
</dbReference>
<dbReference type="NCBIfam" id="TIGR03631">
    <property type="entry name" value="uS13_bact"/>
    <property type="match status" value="1"/>
</dbReference>
<dbReference type="PANTHER" id="PTHR10871">
    <property type="entry name" value="30S RIBOSOMAL PROTEIN S13/40S RIBOSOMAL PROTEIN S18"/>
    <property type="match status" value="1"/>
</dbReference>
<dbReference type="PANTHER" id="PTHR10871:SF1">
    <property type="entry name" value="SMALL RIBOSOMAL SUBUNIT PROTEIN US13M"/>
    <property type="match status" value="1"/>
</dbReference>
<dbReference type="Pfam" id="PF00416">
    <property type="entry name" value="Ribosomal_S13"/>
    <property type="match status" value="1"/>
</dbReference>
<dbReference type="PIRSF" id="PIRSF002134">
    <property type="entry name" value="Ribosomal_S13"/>
    <property type="match status" value="1"/>
</dbReference>
<dbReference type="SUPFAM" id="SSF46946">
    <property type="entry name" value="S13-like H2TH domain"/>
    <property type="match status" value="1"/>
</dbReference>
<dbReference type="PROSITE" id="PS00646">
    <property type="entry name" value="RIBOSOMAL_S13_1"/>
    <property type="match status" value="1"/>
</dbReference>
<dbReference type="PROSITE" id="PS50159">
    <property type="entry name" value="RIBOSOMAL_S13_2"/>
    <property type="match status" value="1"/>
</dbReference>
<name>RS13_THEP1</name>
<protein>
    <recommendedName>
        <fullName evidence="1">Small ribosomal subunit protein uS13</fullName>
    </recommendedName>
    <alternativeName>
        <fullName evidence="3">30S ribosomal protein S13</fullName>
    </alternativeName>
</protein>
<accession>A5IMA8</accession>
<reference key="1">
    <citation type="submission" date="2007-05" db="EMBL/GenBank/DDBJ databases">
        <title>Complete sequence of Thermotoga petrophila RKU-1.</title>
        <authorList>
            <consortium name="US DOE Joint Genome Institute"/>
            <person name="Copeland A."/>
            <person name="Lucas S."/>
            <person name="Lapidus A."/>
            <person name="Barry K."/>
            <person name="Glavina del Rio T."/>
            <person name="Dalin E."/>
            <person name="Tice H."/>
            <person name="Pitluck S."/>
            <person name="Sims D."/>
            <person name="Brettin T."/>
            <person name="Bruce D."/>
            <person name="Detter J.C."/>
            <person name="Han C."/>
            <person name="Tapia R."/>
            <person name="Schmutz J."/>
            <person name="Larimer F."/>
            <person name="Land M."/>
            <person name="Hauser L."/>
            <person name="Kyrpides N."/>
            <person name="Mikhailova N."/>
            <person name="Nelson K."/>
            <person name="Gogarten J.P."/>
            <person name="Noll K."/>
            <person name="Richardson P."/>
        </authorList>
    </citation>
    <scope>NUCLEOTIDE SEQUENCE [LARGE SCALE GENOMIC DNA]</scope>
    <source>
        <strain>ATCC BAA-488 / DSM 13995 / JCM 10881 / RKU-1</strain>
    </source>
</reference>
<sequence>MARIVGVELPNNKKVWVALTYIYGIGRSRSFEILKNTGIDPEKRVGDLTDEEISKITKYIQDHFKVEGELRSEVERNIRRLIEIGCYRGIRHKLGLPVRGQKTRSNARTRKGPRPSRIKTKKKSS</sequence>